<proteinExistence type="inferred from homology"/>
<dbReference type="EC" id="2.7.1.2" evidence="1"/>
<dbReference type="EMBL" id="CP000802">
    <property type="protein sequence ID" value="ABV06796.1"/>
    <property type="molecule type" value="Genomic_DNA"/>
</dbReference>
<dbReference type="RefSeq" id="WP_000170346.1">
    <property type="nucleotide sequence ID" value="NC_009800.1"/>
</dbReference>
<dbReference type="SMR" id="A8A2P2"/>
<dbReference type="GeneID" id="75202543"/>
<dbReference type="KEGG" id="ecx:EcHS_A2525"/>
<dbReference type="HOGENOM" id="CLU_042582_1_0_6"/>
<dbReference type="GO" id="GO:0005829">
    <property type="term" value="C:cytosol"/>
    <property type="evidence" value="ECO:0007669"/>
    <property type="project" value="TreeGrafter"/>
</dbReference>
<dbReference type="GO" id="GO:0005524">
    <property type="term" value="F:ATP binding"/>
    <property type="evidence" value="ECO:0007669"/>
    <property type="project" value="UniProtKB-UniRule"/>
</dbReference>
<dbReference type="GO" id="GO:0005536">
    <property type="term" value="F:D-glucose binding"/>
    <property type="evidence" value="ECO:0007669"/>
    <property type="project" value="InterPro"/>
</dbReference>
<dbReference type="GO" id="GO:0004340">
    <property type="term" value="F:glucokinase activity"/>
    <property type="evidence" value="ECO:0007669"/>
    <property type="project" value="UniProtKB-UniRule"/>
</dbReference>
<dbReference type="GO" id="GO:0006096">
    <property type="term" value="P:glycolytic process"/>
    <property type="evidence" value="ECO:0007669"/>
    <property type="project" value="UniProtKB-UniRule"/>
</dbReference>
<dbReference type="CDD" id="cd24008">
    <property type="entry name" value="ASKHA_NBD_GLK"/>
    <property type="match status" value="1"/>
</dbReference>
<dbReference type="FunFam" id="3.30.420.40:FF:000045">
    <property type="entry name" value="Glucokinase"/>
    <property type="match status" value="1"/>
</dbReference>
<dbReference type="FunFam" id="3.40.367.20:FF:000002">
    <property type="entry name" value="Glucokinase"/>
    <property type="match status" value="1"/>
</dbReference>
<dbReference type="Gene3D" id="3.30.420.40">
    <property type="match status" value="1"/>
</dbReference>
<dbReference type="Gene3D" id="3.40.367.20">
    <property type="match status" value="1"/>
</dbReference>
<dbReference type="HAMAP" id="MF_00524">
    <property type="entry name" value="Glucokinase"/>
    <property type="match status" value="1"/>
</dbReference>
<dbReference type="InterPro" id="IPR043129">
    <property type="entry name" value="ATPase_NBD"/>
</dbReference>
<dbReference type="InterPro" id="IPR050201">
    <property type="entry name" value="Bacterial_glucokinase"/>
</dbReference>
<dbReference type="InterPro" id="IPR003836">
    <property type="entry name" value="Glucokinase"/>
</dbReference>
<dbReference type="NCBIfam" id="TIGR00749">
    <property type="entry name" value="glk"/>
    <property type="match status" value="1"/>
</dbReference>
<dbReference type="NCBIfam" id="NF001414">
    <property type="entry name" value="PRK00292.1-1"/>
    <property type="match status" value="1"/>
</dbReference>
<dbReference type="NCBIfam" id="NF001416">
    <property type="entry name" value="PRK00292.1-3"/>
    <property type="match status" value="1"/>
</dbReference>
<dbReference type="PANTHER" id="PTHR47690">
    <property type="entry name" value="GLUCOKINASE"/>
    <property type="match status" value="1"/>
</dbReference>
<dbReference type="PANTHER" id="PTHR47690:SF1">
    <property type="entry name" value="GLUCOKINASE"/>
    <property type="match status" value="1"/>
</dbReference>
<dbReference type="Pfam" id="PF02685">
    <property type="entry name" value="Glucokinase"/>
    <property type="match status" value="1"/>
</dbReference>
<dbReference type="SUPFAM" id="SSF53067">
    <property type="entry name" value="Actin-like ATPase domain"/>
    <property type="match status" value="1"/>
</dbReference>
<evidence type="ECO:0000255" key="1">
    <source>
        <dbReference type="HAMAP-Rule" id="MF_00524"/>
    </source>
</evidence>
<protein>
    <recommendedName>
        <fullName evidence="1">Glucokinase</fullName>
        <ecNumber evidence="1">2.7.1.2</ecNumber>
    </recommendedName>
    <alternativeName>
        <fullName evidence="1">Glucose kinase</fullName>
    </alternativeName>
</protein>
<accession>A8A2P2</accession>
<reference key="1">
    <citation type="journal article" date="2008" name="J. Bacteriol.">
        <title>The pangenome structure of Escherichia coli: comparative genomic analysis of E. coli commensal and pathogenic isolates.</title>
        <authorList>
            <person name="Rasko D.A."/>
            <person name="Rosovitz M.J."/>
            <person name="Myers G.S.A."/>
            <person name="Mongodin E.F."/>
            <person name="Fricke W.F."/>
            <person name="Gajer P."/>
            <person name="Crabtree J."/>
            <person name="Sebaihia M."/>
            <person name="Thomson N.R."/>
            <person name="Chaudhuri R."/>
            <person name="Henderson I.R."/>
            <person name="Sperandio V."/>
            <person name="Ravel J."/>
        </authorList>
    </citation>
    <scope>NUCLEOTIDE SEQUENCE [LARGE SCALE GENOMIC DNA]</scope>
    <source>
        <strain>HS</strain>
    </source>
</reference>
<comment type="function">
    <text>Not highly important in E.coli as glucose is transported into the cell by the PTS system already as glucose 6-phosphate.</text>
</comment>
<comment type="catalytic activity">
    <reaction evidence="1">
        <text>D-glucose + ATP = D-glucose 6-phosphate + ADP + H(+)</text>
        <dbReference type="Rhea" id="RHEA:17825"/>
        <dbReference type="ChEBI" id="CHEBI:4167"/>
        <dbReference type="ChEBI" id="CHEBI:15378"/>
        <dbReference type="ChEBI" id="CHEBI:30616"/>
        <dbReference type="ChEBI" id="CHEBI:61548"/>
        <dbReference type="ChEBI" id="CHEBI:456216"/>
        <dbReference type="EC" id="2.7.1.2"/>
    </reaction>
</comment>
<comment type="subcellular location">
    <subcellularLocation>
        <location evidence="1">Cytoplasm</location>
    </subcellularLocation>
</comment>
<comment type="similarity">
    <text evidence="1">Belongs to the bacterial glucokinase family.</text>
</comment>
<sequence>MTKYALVGDVGGTNARLALCDIASGEISQAKTYSGLDYPSLEAVIRVYLEEHKVEVKDGCIAIACPITGDWVAMTNHTWAFSIAEMKKNLGFSHLEIINDFTAVSMAIPMLKKEHLIQFGGAEPVEGKPIAVYGAGTGLGVAHLVHVDKRWVSLPGEGGHVDFAPNSEEEAIILEILRAEIGHVSAERVLSGPGLVNLYRAIVKADNRLPENLKPKDITERALADSCTDCRRALSLFCVIMGRFGGNLALNLGTFGGVFIAGGIVPRFLEFFKASGFRAAFEDKGRFKEYVHDIPVYLIVHDNPGLLGSGAHLRQTLGHIL</sequence>
<feature type="chain" id="PRO_1000060924" description="Glucokinase">
    <location>
        <begin position="1"/>
        <end position="321"/>
    </location>
</feature>
<feature type="binding site" evidence="1">
    <location>
        <begin position="8"/>
        <end position="13"/>
    </location>
    <ligand>
        <name>ATP</name>
        <dbReference type="ChEBI" id="CHEBI:30616"/>
    </ligand>
</feature>
<keyword id="KW-0067">ATP-binding</keyword>
<keyword id="KW-0963">Cytoplasm</keyword>
<keyword id="KW-0324">Glycolysis</keyword>
<keyword id="KW-0418">Kinase</keyword>
<keyword id="KW-0547">Nucleotide-binding</keyword>
<keyword id="KW-0808">Transferase</keyword>
<organism>
    <name type="scientific">Escherichia coli O9:H4 (strain HS)</name>
    <dbReference type="NCBI Taxonomy" id="331112"/>
    <lineage>
        <taxon>Bacteria</taxon>
        <taxon>Pseudomonadati</taxon>
        <taxon>Pseudomonadota</taxon>
        <taxon>Gammaproteobacteria</taxon>
        <taxon>Enterobacterales</taxon>
        <taxon>Enterobacteriaceae</taxon>
        <taxon>Escherichia</taxon>
    </lineage>
</organism>
<gene>
    <name evidence="1" type="primary">glk</name>
    <name type="ordered locus">EcHS_A2525</name>
</gene>
<name>GLK_ECOHS</name>